<sequence>MKKIDVKILDPRVRKEFPLPTYATSGSAGLDLRACLDDAVELAPGDTTLVPTGLAIHIADPSLAAMMLPRSGLGHKHGIVLGNLVGLIDSDYQGQLMISVWNRGQDSFTIQPGERIAQMIFVPVVQAEFNLVEDFDATDRGEGGFGHSGRQ</sequence>
<comment type="function">
    <text evidence="1">This enzyme is involved in nucleotide metabolism: it produces dUMP, the immediate precursor of thymidine nucleotides and it decreases the intracellular concentration of dUTP so that uracil cannot be incorporated into DNA.</text>
</comment>
<comment type="catalytic activity">
    <reaction evidence="1">
        <text>dUTP + H2O = dUMP + diphosphate + H(+)</text>
        <dbReference type="Rhea" id="RHEA:10248"/>
        <dbReference type="ChEBI" id="CHEBI:15377"/>
        <dbReference type="ChEBI" id="CHEBI:15378"/>
        <dbReference type="ChEBI" id="CHEBI:33019"/>
        <dbReference type="ChEBI" id="CHEBI:61555"/>
        <dbReference type="ChEBI" id="CHEBI:246422"/>
        <dbReference type="EC" id="3.6.1.23"/>
    </reaction>
</comment>
<comment type="cofactor">
    <cofactor evidence="1">
        <name>Mg(2+)</name>
        <dbReference type="ChEBI" id="CHEBI:18420"/>
    </cofactor>
</comment>
<comment type="pathway">
    <text evidence="1">Pyrimidine metabolism; dUMP biosynthesis; dUMP from dCTP (dUTP route): step 2/2.</text>
</comment>
<comment type="similarity">
    <text evidence="1">Belongs to the dUTPase family.</text>
</comment>
<reference key="1">
    <citation type="journal article" date="2006" name="BMC Genomics">
        <title>Complete genome sequence of Shigella flexneri 5b and comparison with Shigella flexneri 2a.</title>
        <authorList>
            <person name="Nie H."/>
            <person name="Yang F."/>
            <person name="Zhang X."/>
            <person name="Yang J."/>
            <person name="Chen L."/>
            <person name="Wang J."/>
            <person name="Xiong Z."/>
            <person name="Peng J."/>
            <person name="Sun L."/>
            <person name="Dong J."/>
            <person name="Xue Y."/>
            <person name="Xu X."/>
            <person name="Chen S."/>
            <person name="Yao Z."/>
            <person name="Shen Y."/>
            <person name="Jin Q."/>
        </authorList>
    </citation>
    <scope>NUCLEOTIDE SEQUENCE [LARGE SCALE GENOMIC DNA]</scope>
    <source>
        <strain>8401</strain>
    </source>
</reference>
<gene>
    <name evidence="1" type="primary">dut</name>
    <name type="ordered locus">SFV_3890</name>
</gene>
<keyword id="KW-0378">Hydrolase</keyword>
<keyword id="KW-0460">Magnesium</keyword>
<keyword id="KW-0479">Metal-binding</keyword>
<keyword id="KW-0546">Nucleotide metabolism</keyword>
<dbReference type="EC" id="3.6.1.23" evidence="1"/>
<dbReference type="EMBL" id="CP000266">
    <property type="protein sequence ID" value="ABF05898.1"/>
    <property type="molecule type" value="Genomic_DNA"/>
</dbReference>
<dbReference type="SMR" id="Q0SYG7"/>
<dbReference type="KEGG" id="sfv:SFV_3890"/>
<dbReference type="HOGENOM" id="CLU_068508_1_1_6"/>
<dbReference type="UniPathway" id="UPA00610">
    <property type="reaction ID" value="UER00666"/>
</dbReference>
<dbReference type="Proteomes" id="UP000000659">
    <property type="component" value="Chromosome"/>
</dbReference>
<dbReference type="GO" id="GO:0004170">
    <property type="term" value="F:dUTP diphosphatase activity"/>
    <property type="evidence" value="ECO:0007669"/>
    <property type="project" value="UniProtKB-UniRule"/>
</dbReference>
<dbReference type="GO" id="GO:0000287">
    <property type="term" value="F:magnesium ion binding"/>
    <property type="evidence" value="ECO:0007669"/>
    <property type="project" value="UniProtKB-UniRule"/>
</dbReference>
<dbReference type="GO" id="GO:0006226">
    <property type="term" value="P:dUMP biosynthetic process"/>
    <property type="evidence" value="ECO:0007669"/>
    <property type="project" value="UniProtKB-UniRule"/>
</dbReference>
<dbReference type="GO" id="GO:0046081">
    <property type="term" value="P:dUTP catabolic process"/>
    <property type="evidence" value="ECO:0007669"/>
    <property type="project" value="InterPro"/>
</dbReference>
<dbReference type="CDD" id="cd07557">
    <property type="entry name" value="trimeric_dUTPase"/>
    <property type="match status" value="1"/>
</dbReference>
<dbReference type="FunFam" id="2.70.40.10:FF:000002">
    <property type="entry name" value="dUTP diphosphatase"/>
    <property type="match status" value="1"/>
</dbReference>
<dbReference type="Gene3D" id="2.70.40.10">
    <property type="match status" value="1"/>
</dbReference>
<dbReference type="HAMAP" id="MF_00116">
    <property type="entry name" value="dUTPase_bact"/>
    <property type="match status" value="1"/>
</dbReference>
<dbReference type="InterPro" id="IPR008181">
    <property type="entry name" value="dUTPase"/>
</dbReference>
<dbReference type="InterPro" id="IPR029054">
    <property type="entry name" value="dUTPase-like"/>
</dbReference>
<dbReference type="InterPro" id="IPR036157">
    <property type="entry name" value="dUTPase-like_sf"/>
</dbReference>
<dbReference type="InterPro" id="IPR033704">
    <property type="entry name" value="dUTPase_trimeric"/>
</dbReference>
<dbReference type="NCBIfam" id="TIGR00576">
    <property type="entry name" value="dut"/>
    <property type="match status" value="1"/>
</dbReference>
<dbReference type="NCBIfam" id="NF001862">
    <property type="entry name" value="PRK00601.1"/>
    <property type="match status" value="1"/>
</dbReference>
<dbReference type="PANTHER" id="PTHR11241">
    <property type="entry name" value="DEOXYURIDINE 5'-TRIPHOSPHATE NUCLEOTIDOHYDROLASE"/>
    <property type="match status" value="1"/>
</dbReference>
<dbReference type="PANTHER" id="PTHR11241:SF0">
    <property type="entry name" value="DEOXYURIDINE 5'-TRIPHOSPHATE NUCLEOTIDOHYDROLASE"/>
    <property type="match status" value="1"/>
</dbReference>
<dbReference type="Pfam" id="PF00692">
    <property type="entry name" value="dUTPase"/>
    <property type="match status" value="1"/>
</dbReference>
<dbReference type="SUPFAM" id="SSF51283">
    <property type="entry name" value="dUTPase-like"/>
    <property type="match status" value="1"/>
</dbReference>
<evidence type="ECO:0000255" key="1">
    <source>
        <dbReference type="HAMAP-Rule" id="MF_00116"/>
    </source>
</evidence>
<protein>
    <recommendedName>
        <fullName evidence="1">Deoxyuridine 5'-triphosphate nucleotidohydrolase</fullName>
        <shortName evidence="1">dUTPase</shortName>
        <ecNumber evidence="1">3.6.1.23</ecNumber>
    </recommendedName>
    <alternativeName>
        <fullName evidence="1">dUTP pyrophosphatase</fullName>
    </alternativeName>
</protein>
<name>DUT_SHIF8</name>
<proteinExistence type="inferred from homology"/>
<organism>
    <name type="scientific">Shigella flexneri serotype 5b (strain 8401)</name>
    <dbReference type="NCBI Taxonomy" id="373384"/>
    <lineage>
        <taxon>Bacteria</taxon>
        <taxon>Pseudomonadati</taxon>
        <taxon>Pseudomonadota</taxon>
        <taxon>Gammaproteobacteria</taxon>
        <taxon>Enterobacterales</taxon>
        <taxon>Enterobacteriaceae</taxon>
        <taxon>Shigella</taxon>
    </lineage>
</organism>
<feature type="chain" id="PRO_1000015522" description="Deoxyuridine 5'-triphosphate nucleotidohydrolase">
    <location>
        <begin position="1"/>
        <end position="151"/>
    </location>
</feature>
<feature type="binding site" evidence="1">
    <location>
        <begin position="70"/>
        <end position="72"/>
    </location>
    <ligand>
        <name>substrate</name>
    </ligand>
</feature>
<feature type="binding site" evidence="1">
    <location>
        <position position="83"/>
    </location>
    <ligand>
        <name>substrate</name>
    </ligand>
</feature>
<feature type="binding site" evidence="1">
    <location>
        <begin position="87"/>
        <end position="89"/>
    </location>
    <ligand>
        <name>substrate</name>
    </ligand>
</feature>
<feature type="binding site" evidence="1">
    <location>
        <position position="97"/>
    </location>
    <ligand>
        <name>substrate</name>
    </ligand>
</feature>
<accession>Q0SYG7</accession>